<proteinExistence type="inferred from homology"/>
<dbReference type="EC" id="3.1.21.7" evidence="1"/>
<dbReference type="EMBL" id="CP001403">
    <property type="protein sequence ID" value="ACP44539.1"/>
    <property type="molecule type" value="Genomic_DNA"/>
</dbReference>
<dbReference type="RefSeq" id="WP_010923862.1">
    <property type="nucleotide sequence ID" value="NC_012622.1"/>
</dbReference>
<dbReference type="SMR" id="C3N977"/>
<dbReference type="KEGG" id="siy:YG5714_0246"/>
<dbReference type="HOGENOM" id="CLU_047631_1_1_2"/>
<dbReference type="Proteomes" id="UP000002308">
    <property type="component" value="Chromosome"/>
</dbReference>
<dbReference type="GO" id="GO:0005737">
    <property type="term" value="C:cytoplasm"/>
    <property type="evidence" value="ECO:0007669"/>
    <property type="project" value="UniProtKB-SubCell"/>
</dbReference>
<dbReference type="GO" id="GO:0043737">
    <property type="term" value="F:deoxyribonuclease V activity"/>
    <property type="evidence" value="ECO:0007669"/>
    <property type="project" value="UniProtKB-UniRule"/>
</dbReference>
<dbReference type="GO" id="GO:0000287">
    <property type="term" value="F:magnesium ion binding"/>
    <property type="evidence" value="ECO:0007669"/>
    <property type="project" value="UniProtKB-UniRule"/>
</dbReference>
<dbReference type="GO" id="GO:0016891">
    <property type="term" value="F:RNA endonuclease activity, producing 5'-phosphomonoesters"/>
    <property type="evidence" value="ECO:0007669"/>
    <property type="project" value="TreeGrafter"/>
</dbReference>
<dbReference type="GO" id="GO:0003727">
    <property type="term" value="F:single-stranded RNA binding"/>
    <property type="evidence" value="ECO:0007669"/>
    <property type="project" value="TreeGrafter"/>
</dbReference>
<dbReference type="GO" id="GO:0006281">
    <property type="term" value="P:DNA repair"/>
    <property type="evidence" value="ECO:0007669"/>
    <property type="project" value="UniProtKB-UniRule"/>
</dbReference>
<dbReference type="CDD" id="cd06559">
    <property type="entry name" value="Endonuclease_V"/>
    <property type="match status" value="1"/>
</dbReference>
<dbReference type="FunFam" id="3.30.2170.10:FF:000006">
    <property type="entry name" value="Endonuclease V"/>
    <property type="match status" value="1"/>
</dbReference>
<dbReference type="Gene3D" id="3.30.2170.10">
    <property type="entry name" value="archaeoglobus fulgidus dsm 4304 superfamily"/>
    <property type="match status" value="1"/>
</dbReference>
<dbReference type="HAMAP" id="MF_00801">
    <property type="entry name" value="Endonuclease_5"/>
    <property type="match status" value="1"/>
</dbReference>
<dbReference type="InterPro" id="IPR007581">
    <property type="entry name" value="Endonuclease-V"/>
</dbReference>
<dbReference type="PANTHER" id="PTHR28511">
    <property type="entry name" value="ENDONUCLEASE V"/>
    <property type="match status" value="1"/>
</dbReference>
<dbReference type="PANTHER" id="PTHR28511:SF1">
    <property type="entry name" value="ENDONUCLEASE V"/>
    <property type="match status" value="1"/>
</dbReference>
<dbReference type="Pfam" id="PF04493">
    <property type="entry name" value="Endonuclease_5"/>
    <property type="match status" value="1"/>
</dbReference>
<comment type="function">
    <text evidence="1">DNA repair enzyme involved in the repair of deaminated bases. Selectively cleaves double-stranded DNA at the second phosphodiester bond 3' to a deoxyinosine leaving behind the intact lesion on the nicked DNA.</text>
</comment>
<comment type="catalytic activity">
    <reaction evidence="1">
        <text>Endonucleolytic cleavage at apurinic or apyrimidinic sites to products with a 5'-phosphate.</text>
        <dbReference type="EC" id="3.1.21.7"/>
    </reaction>
</comment>
<comment type="cofactor">
    <cofactor evidence="1">
        <name>Mg(2+)</name>
        <dbReference type="ChEBI" id="CHEBI:18420"/>
    </cofactor>
</comment>
<comment type="subcellular location">
    <subcellularLocation>
        <location evidence="1">Cytoplasm</location>
    </subcellularLocation>
</comment>
<comment type="similarity">
    <text evidence="1">Belongs to the endonuclease V family.</text>
</comment>
<reference key="1">
    <citation type="journal article" date="2009" name="Proc. Natl. Acad. Sci. U.S.A.">
        <title>Biogeography of the Sulfolobus islandicus pan-genome.</title>
        <authorList>
            <person name="Reno M.L."/>
            <person name="Held N.L."/>
            <person name="Fields C.J."/>
            <person name="Burke P.V."/>
            <person name="Whitaker R.J."/>
        </authorList>
    </citation>
    <scope>NUCLEOTIDE SEQUENCE [LARGE SCALE GENOMIC DNA]</scope>
    <source>
        <strain>Y.G.57.14 / Yellowstone #1</strain>
    </source>
</reference>
<accession>C3N977</accession>
<sequence>MVEKHLLEFLEKLQFLISKNVKISHYGIENVKKICGVDIAYKGNLGFSVGVSMDINSGDYNYKSYVGEVNFPYIPGFLFMREAPLMIKAIEGLDCHLLLVDGHGIAHPRKSGIAAVIGVLLDFPTIGVAKSRLTGDLVNESEITYVYLNGEKVGVKFGRYFYSPGNKVDLQDCIELGKRGYPKVLKIADMLTKKIKKE</sequence>
<name>NFI_SACI7</name>
<evidence type="ECO:0000255" key="1">
    <source>
        <dbReference type="HAMAP-Rule" id="MF_00801"/>
    </source>
</evidence>
<feature type="chain" id="PRO_1000212982" description="Endonuclease V">
    <location>
        <begin position="1"/>
        <end position="198"/>
    </location>
</feature>
<feature type="binding site" evidence="1">
    <location>
        <position position="38"/>
    </location>
    <ligand>
        <name>Mg(2+)</name>
        <dbReference type="ChEBI" id="CHEBI:18420"/>
    </ligand>
</feature>
<feature type="binding site" evidence="1">
    <location>
        <position position="101"/>
    </location>
    <ligand>
        <name>Mg(2+)</name>
        <dbReference type="ChEBI" id="CHEBI:18420"/>
    </ligand>
</feature>
<feature type="site" description="Interaction with target DNA" evidence="1">
    <location>
        <position position="73"/>
    </location>
</feature>
<protein>
    <recommendedName>
        <fullName evidence="1">Endonuclease V</fullName>
        <ecNumber evidence="1">3.1.21.7</ecNumber>
    </recommendedName>
    <alternativeName>
        <fullName evidence="1">Deoxyinosine 3'endonuclease</fullName>
    </alternativeName>
    <alternativeName>
        <fullName evidence="1">Deoxyribonuclease V</fullName>
        <shortName evidence="1">DNase V</shortName>
    </alternativeName>
</protein>
<gene>
    <name evidence="1" type="primary">nfi</name>
    <name type="ordered locus">YG5714_0246</name>
</gene>
<organism>
    <name type="scientific">Saccharolobus islandicus (strain Y.G.57.14 / Yellowstone #1)</name>
    <name type="common">Sulfolobus islandicus</name>
    <dbReference type="NCBI Taxonomy" id="439386"/>
    <lineage>
        <taxon>Archaea</taxon>
        <taxon>Thermoproteota</taxon>
        <taxon>Thermoprotei</taxon>
        <taxon>Sulfolobales</taxon>
        <taxon>Sulfolobaceae</taxon>
        <taxon>Saccharolobus</taxon>
    </lineage>
</organism>
<keyword id="KW-0963">Cytoplasm</keyword>
<keyword id="KW-0227">DNA damage</keyword>
<keyword id="KW-0234">DNA repair</keyword>
<keyword id="KW-0255">Endonuclease</keyword>
<keyword id="KW-0378">Hydrolase</keyword>
<keyword id="KW-0460">Magnesium</keyword>
<keyword id="KW-0479">Metal-binding</keyword>
<keyword id="KW-0540">Nuclease</keyword>